<evidence type="ECO:0000250" key="1"/>
<evidence type="ECO:0000255" key="2"/>
<evidence type="ECO:0000256" key="3">
    <source>
        <dbReference type="SAM" id="MobiDB-lite"/>
    </source>
</evidence>
<evidence type="ECO:0000305" key="4"/>
<accession>D2Y280</accession>
<reference key="1">
    <citation type="journal article" date="2010" name="J. Proteome Res.">
        <title>Molecular diversification of peptide toxins from the tarantula Haplopelma hainanum (Ornithoctonus hainana) venom based on transcriptomic, peptidomic, and genomic analyses.</title>
        <authorList>
            <person name="Tang X."/>
            <person name="Zhang Y."/>
            <person name="Hu W."/>
            <person name="Xu D."/>
            <person name="Tao H."/>
            <person name="Yang X."/>
            <person name="Li Y."/>
            <person name="Jiang L."/>
            <person name="Liang S."/>
        </authorList>
    </citation>
    <scope>NUCLEOTIDE SEQUENCE [LARGE SCALE MRNA]</scope>
    <source>
        <tissue>Venom gland</tissue>
    </source>
</reference>
<keyword id="KW-1015">Disulfide bond</keyword>
<keyword id="KW-0872">Ion channel impairing toxin</keyword>
<keyword id="KW-0960">Knottin</keyword>
<keyword id="KW-0964">Secreted</keyword>
<keyword id="KW-0732">Signal</keyword>
<keyword id="KW-0800">Toxin</keyword>
<organism>
    <name type="scientific">Cyriopagopus hainanus</name>
    <name type="common">Chinese bird spider</name>
    <name type="synonym">Haplopelma hainanum</name>
    <dbReference type="NCBI Taxonomy" id="209901"/>
    <lineage>
        <taxon>Eukaryota</taxon>
        <taxon>Metazoa</taxon>
        <taxon>Ecdysozoa</taxon>
        <taxon>Arthropoda</taxon>
        <taxon>Chelicerata</taxon>
        <taxon>Arachnida</taxon>
        <taxon>Araneae</taxon>
        <taxon>Mygalomorphae</taxon>
        <taxon>Theraphosidae</taxon>
        <taxon>Haplopelma</taxon>
    </lineage>
</organism>
<dbReference type="EMBL" id="GU292957">
    <property type="protein sequence ID" value="ADB56773.1"/>
    <property type="molecule type" value="mRNA"/>
</dbReference>
<dbReference type="SMR" id="D2Y280"/>
<dbReference type="ArachnoServer" id="AS001679">
    <property type="toxin name" value="U11-theraphotoxin-Hhn1j"/>
</dbReference>
<dbReference type="GO" id="GO:0005576">
    <property type="term" value="C:extracellular region"/>
    <property type="evidence" value="ECO:0007669"/>
    <property type="project" value="UniProtKB-SubCell"/>
</dbReference>
<dbReference type="GO" id="GO:0019871">
    <property type="term" value="F:sodium channel inhibitor activity"/>
    <property type="evidence" value="ECO:0007669"/>
    <property type="project" value="InterPro"/>
</dbReference>
<dbReference type="GO" id="GO:0090729">
    <property type="term" value="F:toxin activity"/>
    <property type="evidence" value="ECO:0007669"/>
    <property type="project" value="UniProtKB-KW"/>
</dbReference>
<dbReference type="InterPro" id="IPR012627">
    <property type="entry name" value="Toxin_22"/>
</dbReference>
<dbReference type="Pfam" id="PF08092">
    <property type="entry name" value="Toxin_22"/>
    <property type="match status" value="1"/>
</dbReference>
<feature type="signal peptide" evidence="2">
    <location>
        <begin position="1"/>
        <end position="21"/>
    </location>
</feature>
<feature type="propeptide" id="PRO_0000400935" evidence="1">
    <location>
        <begin position="22"/>
        <end position="74"/>
    </location>
</feature>
<feature type="peptide" id="PRO_0000400936" description="U11-theraphotoxin-Hhn1j">
    <location>
        <begin position="75"/>
        <end position="113"/>
    </location>
</feature>
<feature type="region of interest" description="Disordered" evidence="3">
    <location>
        <begin position="60"/>
        <end position="83"/>
    </location>
</feature>
<feature type="compositionally biased region" description="Basic and acidic residues" evidence="3">
    <location>
        <begin position="60"/>
        <end position="69"/>
    </location>
</feature>
<feature type="disulfide bond" evidence="1">
    <location>
        <begin position="75"/>
        <end position="90"/>
    </location>
</feature>
<feature type="disulfide bond" evidence="1">
    <location>
        <begin position="82"/>
        <end position="95"/>
    </location>
</feature>
<feature type="disulfide bond" evidence="1">
    <location>
        <begin position="89"/>
        <end position="110"/>
    </location>
</feature>
<protein>
    <recommendedName>
        <fullName>U11-theraphotoxin-Hhn1j</fullName>
        <shortName>U11-TRTX-Hhn1j</shortName>
    </recommendedName>
    <alternativeName>
        <fullName>Hainantoxin-XVI-10</fullName>
        <shortName>HNTX-XVI-10</shortName>
    </alternativeName>
</protein>
<name>H16J1_CYRHA</name>
<sequence length="113" mass="13063">MNTVRVTFLLVFVLAVSLGQADKDENRMEMQEKTEQGKSYLDFAENLLLQKLEELEAKLLEEDSEESRNSRQKRCIGEGVPCDENDPRCCSGLVCLKPTLHGIWYKSHYCYKK</sequence>
<comment type="function">
    <text evidence="1">Probable ion channel inhibitor.</text>
</comment>
<comment type="subcellular location">
    <subcellularLocation>
        <location evidence="1">Secreted</location>
    </subcellularLocation>
</comment>
<comment type="tissue specificity">
    <text>Expressed by the venom gland.</text>
</comment>
<comment type="domain">
    <text evidence="1">The presence of a 'disulfide through disulfide knot' structurally defines this protein as a knottin.</text>
</comment>
<comment type="similarity">
    <text evidence="4">Belongs to the neurotoxin 14 (magi-1) family. 01 (HNTX-16) subfamily.</text>
</comment>
<proteinExistence type="evidence at transcript level"/>